<feature type="chain" id="PRO_0000231719" description="Imidazole glycerol phosphate synthase subunit HisH">
    <location>
        <begin position="1"/>
        <end position="215"/>
    </location>
</feature>
<feature type="domain" description="Glutamine amidotransferase type-1" evidence="1">
    <location>
        <begin position="7"/>
        <end position="215"/>
    </location>
</feature>
<feature type="active site" description="Nucleophile" evidence="1">
    <location>
        <position position="86"/>
    </location>
</feature>
<feature type="active site" evidence="1">
    <location>
        <position position="195"/>
    </location>
</feature>
<feature type="active site" evidence="1">
    <location>
        <position position="197"/>
    </location>
</feature>
<proteinExistence type="inferred from homology"/>
<evidence type="ECO:0000255" key="1">
    <source>
        <dbReference type="HAMAP-Rule" id="MF_00278"/>
    </source>
</evidence>
<reference key="1">
    <citation type="journal article" date="2009" name="BMC Genomics">
        <title>Metabolic analysis of the soil microbe Dechloromonas aromatica str. RCB: indications of a surprisingly complex life-style and cryptic anaerobic pathways for aromatic degradation.</title>
        <authorList>
            <person name="Salinero K.K."/>
            <person name="Keller K."/>
            <person name="Feil W.S."/>
            <person name="Feil H."/>
            <person name="Trong S."/>
            <person name="Di Bartolo G."/>
            <person name="Lapidus A."/>
        </authorList>
    </citation>
    <scope>NUCLEOTIDE SEQUENCE [LARGE SCALE GENOMIC DNA]</scope>
    <source>
        <strain>RCB</strain>
    </source>
</reference>
<comment type="function">
    <text evidence="1">IGPS catalyzes the conversion of PRFAR and glutamine to IGP, AICAR and glutamate. The HisH subunit catalyzes the hydrolysis of glutamine to glutamate and ammonia as part of the synthesis of IGP and AICAR. The resulting ammonia molecule is channeled to the active site of HisF.</text>
</comment>
<comment type="catalytic activity">
    <reaction evidence="1">
        <text>5-[(5-phospho-1-deoxy-D-ribulos-1-ylimino)methylamino]-1-(5-phospho-beta-D-ribosyl)imidazole-4-carboxamide + L-glutamine = D-erythro-1-(imidazol-4-yl)glycerol 3-phosphate + 5-amino-1-(5-phospho-beta-D-ribosyl)imidazole-4-carboxamide + L-glutamate + H(+)</text>
        <dbReference type="Rhea" id="RHEA:24793"/>
        <dbReference type="ChEBI" id="CHEBI:15378"/>
        <dbReference type="ChEBI" id="CHEBI:29985"/>
        <dbReference type="ChEBI" id="CHEBI:58278"/>
        <dbReference type="ChEBI" id="CHEBI:58359"/>
        <dbReference type="ChEBI" id="CHEBI:58475"/>
        <dbReference type="ChEBI" id="CHEBI:58525"/>
        <dbReference type="EC" id="4.3.2.10"/>
    </reaction>
</comment>
<comment type="catalytic activity">
    <reaction evidence="1">
        <text>L-glutamine + H2O = L-glutamate + NH4(+)</text>
        <dbReference type="Rhea" id="RHEA:15889"/>
        <dbReference type="ChEBI" id="CHEBI:15377"/>
        <dbReference type="ChEBI" id="CHEBI:28938"/>
        <dbReference type="ChEBI" id="CHEBI:29985"/>
        <dbReference type="ChEBI" id="CHEBI:58359"/>
        <dbReference type="EC" id="3.5.1.2"/>
    </reaction>
</comment>
<comment type="pathway">
    <text evidence="1">Amino-acid biosynthesis; L-histidine biosynthesis; L-histidine from 5-phospho-alpha-D-ribose 1-diphosphate: step 5/9.</text>
</comment>
<comment type="subunit">
    <text evidence="1">Heterodimer of HisH and HisF.</text>
</comment>
<comment type="subcellular location">
    <subcellularLocation>
        <location evidence="1">Cytoplasm</location>
    </subcellularLocation>
</comment>
<sequence length="215" mass="23420">MTLAGQTIAVIDYGMGNLRSVSKALEHVAGGKQVIVTADPAVVAAAERVVFPGQGAMPDCMRELDARGLRTAVLAAAKDKPFLGICVGEQMLFEHSDEGNVPALGVFAGNVKRFPDEKMHLPTGERLKVPHMGWNEVRQKPHALWSGIADGSRFYFVHSYFVEPADLALVTGICEYGVPFTCAVGRDNIFAVQFHPEKSARDGLQLLKNFVEWQP</sequence>
<accession>Q47AM1</accession>
<name>HIS5_DECAR</name>
<dbReference type="EC" id="4.3.2.10" evidence="1"/>
<dbReference type="EC" id="3.5.1.2" evidence="1"/>
<dbReference type="EMBL" id="CP000089">
    <property type="protein sequence ID" value="AAZ48110.1"/>
    <property type="molecule type" value="Genomic_DNA"/>
</dbReference>
<dbReference type="SMR" id="Q47AM1"/>
<dbReference type="STRING" id="159087.Daro_3381"/>
<dbReference type="KEGG" id="dar:Daro_3381"/>
<dbReference type="eggNOG" id="COG0118">
    <property type="taxonomic scope" value="Bacteria"/>
</dbReference>
<dbReference type="HOGENOM" id="CLU_071837_2_0_4"/>
<dbReference type="OrthoDB" id="9807137at2"/>
<dbReference type="UniPathway" id="UPA00031">
    <property type="reaction ID" value="UER00010"/>
</dbReference>
<dbReference type="GO" id="GO:0005737">
    <property type="term" value="C:cytoplasm"/>
    <property type="evidence" value="ECO:0007669"/>
    <property type="project" value="UniProtKB-SubCell"/>
</dbReference>
<dbReference type="GO" id="GO:0004359">
    <property type="term" value="F:glutaminase activity"/>
    <property type="evidence" value="ECO:0007669"/>
    <property type="project" value="UniProtKB-EC"/>
</dbReference>
<dbReference type="GO" id="GO:0000107">
    <property type="term" value="F:imidazoleglycerol-phosphate synthase activity"/>
    <property type="evidence" value="ECO:0007669"/>
    <property type="project" value="UniProtKB-UniRule"/>
</dbReference>
<dbReference type="GO" id="GO:0016829">
    <property type="term" value="F:lyase activity"/>
    <property type="evidence" value="ECO:0007669"/>
    <property type="project" value="UniProtKB-KW"/>
</dbReference>
<dbReference type="GO" id="GO:0000105">
    <property type="term" value="P:L-histidine biosynthetic process"/>
    <property type="evidence" value="ECO:0007669"/>
    <property type="project" value="UniProtKB-UniRule"/>
</dbReference>
<dbReference type="CDD" id="cd01748">
    <property type="entry name" value="GATase1_IGP_Synthase"/>
    <property type="match status" value="1"/>
</dbReference>
<dbReference type="Gene3D" id="3.40.50.880">
    <property type="match status" value="1"/>
</dbReference>
<dbReference type="HAMAP" id="MF_00278">
    <property type="entry name" value="HisH"/>
    <property type="match status" value="1"/>
</dbReference>
<dbReference type="InterPro" id="IPR029062">
    <property type="entry name" value="Class_I_gatase-like"/>
</dbReference>
<dbReference type="InterPro" id="IPR017926">
    <property type="entry name" value="GATASE"/>
</dbReference>
<dbReference type="InterPro" id="IPR010139">
    <property type="entry name" value="Imidazole-glycPsynth_HisH"/>
</dbReference>
<dbReference type="NCBIfam" id="TIGR01855">
    <property type="entry name" value="IMP_synth_hisH"/>
    <property type="match status" value="1"/>
</dbReference>
<dbReference type="PANTHER" id="PTHR42701">
    <property type="entry name" value="IMIDAZOLE GLYCEROL PHOSPHATE SYNTHASE SUBUNIT HISH"/>
    <property type="match status" value="1"/>
</dbReference>
<dbReference type="PANTHER" id="PTHR42701:SF2">
    <property type="entry name" value="IMIDAZOLE GLYCEROL PHOSPHATE SYNTHASE SUBUNIT HISH 1"/>
    <property type="match status" value="1"/>
</dbReference>
<dbReference type="Pfam" id="PF00117">
    <property type="entry name" value="GATase"/>
    <property type="match status" value="1"/>
</dbReference>
<dbReference type="PIRSF" id="PIRSF000495">
    <property type="entry name" value="Amidotransf_hisH"/>
    <property type="match status" value="1"/>
</dbReference>
<dbReference type="SUPFAM" id="SSF52317">
    <property type="entry name" value="Class I glutamine amidotransferase-like"/>
    <property type="match status" value="1"/>
</dbReference>
<dbReference type="PROSITE" id="PS51273">
    <property type="entry name" value="GATASE_TYPE_1"/>
    <property type="match status" value="1"/>
</dbReference>
<keyword id="KW-0028">Amino-acid biosynthesis</keyword>
<keyword id="KW-0963">Cytoplasm</keyword>
<keyword id="KW-0315">Glutamine amidotransferase</keyword>
<keyword id="KW-0368">Histidine biosynthesis</keyword>
<keyword id="KW-0378">Hydrolase</keyword>
<keyword id="KW-0456">Lyase</keyword>
<protein>
    <recommendedName>
        <fullName evidence="1">Imidazole glycerol phosphate synthase subunit HisH</fullName>
        <ecNumber evidence="1">4.3.2.10</ecNumber>
    </recommendedName>
    <alternativeName>
        <fullName evidence="1">IGP synthase glutaminase subunit</fullName>
        <ecNumber evidence="1">3.5.1.2</ecNumber>
    </alternativeName>
    <alternativeName>
        <fullName evidence="1">IGP synthase subunit HisH</fullName>
    </alternativeName>
    <alternativeName>
        <fullName evidence="1">ImGP synthase subunit HisH</fullName>
        <shortName evidence="1">IGPS subunit HisH</shortName>
    </alternativeName>
</protein>
<organism>
    <name type="scientific">Dechloromonas aromatica (strain RCB)</name>
    <dbReference type="NCBI Taxonomy" id="159087"/>
    <lineage>
        <taxon>Bacteria</taxon>
        <taxon>Pseudomonadati</taxon>
        <taxon>Pseudomonadota</taxon>
        <taxon>Betaproteobacteria</taxon>
        <taxon>Rhodocyclales</taxon>
        <taxon>Azonexaceae</taxon>
        <taxon>Dechloromonas</taxon>
    </lineage>
</organism>
<gene>
    <name evidence="1" type="primary">hisH</name>
    <name type="ordered locus">Daro_3381</name>
</gene>